<reference key="1">
    <citation type="journal article" date="2007" name="Proc. Natl. Acad. Sci. U.S.A.">
        <title>Genome and proteome of long-chain alkane degrading Geobacillus thermodenitrificans NG80-2 isolated from a deep-subsurface oil reservoir.</title>
        <authorList>
            <person name="Feng L."/>
            <person name="Wang W."/>
            <person name="Cheng J."/>
            <person name="Ren Y."/>
            <person name="Zhao G."/>
            <person name="Gao C."/>
            <person name="Tang Y."/>
            <person name="Liu X."/>
            <person name="Han W."/>
            <person name="Peng X."/>
            <person name="Liu R."/>
            <person name="Wang L."/>
        </authorList>
    </citation>
    <scope>NUCLEOTIDE SEQUENCE [LARGE SCALE GENOMIC DNA]</scope>
    <source>
        <strain>NG80-2</strain>
    </source>
</reference>
<protein>
    <recommendedName>
        <fullName evidence="1">Protein translocase subunit SecA 1</fullName>
        <ecNumber evidence="1">7.4.2.8</ecNumber>
    </recommendedName>
</protein>
<comment type="function">
    <text evidence="1">Part of the Sec protein translocase complex. Interacts with the SecYEG preprotein conducting channel. Has a central role in coupling the hydrolysis of ATP to the transfer of proteins into and across the cell membrane, serving as an ATP-driven molecular motor driving the stepwise translocation of polypeptide chains across the membrane.</text>
</comment>
<comment type="catalytic activity">
    <reaction evidence="1">
        <text>ATP + H2O + cellular proteinSide 1 = ADP + phosphate + cellular proteinSide 2.</text>
        <dbReference type="EC" id="7.4.2.8"/>
    </reaction>
</comment>
<comment type="cofactor">
    <cofactor evidence="1">
        <name>Zn(2+)</name>
        <dbReference type="ChEBI" id="CHEBI:29105"/>
    </cofactor>
    <text evidence="1">May bind 1 zinc ion per subunit.</text>
</comment>
<comment type="subunit">
    <text evidence="1">Monomer and homodimer. Part of the essential Sec protein translocation apparatus which comprises SecA, SecYEG and auxiliary proteins SecDF. Other proteins may also be involved.</text>
</comment>
<comment type="subcellular location">
    <subcellularLocation>
        <location evidence="1">Cell membrane</location>
        <topology evidence="1">Peripheral membrane protein</topology>
        <orientation evidence="1">Cytoplasmic side</orientation>
    </subcellularLocation>
    <subcellularLocation>
        <location evidence="1">Cytoplasm</location>
    </subcellularLocation>
    <text evidence="1">Distribution is 50-50.</text>
</comment>
<comment type="similarity">
    <text evidence="1">Belongs to the SecA family.</text>
</comment>
<comment type="sequence caution" evidence="3">
    <conflict type="erroneous initiation">
        <sequence resource="EMBL-CDS" id="ABO68393"/>
    </conflict>
    <text>Truncated N-terminus.</text>
</comment>
<organism>
    <name type="scientific">Geobacillus thermodenitrificans (strain NG80-2)</name>
    <dbReference type="NCBI Taxonomy" id="420246"/>
    <lineage>
        <taxon>Bacteria</taxon>
        <taxon>Bacillati</taxon>
        <taxon>Bacillota</taxon>
        <taxon>Bacilli</taxon>
        <taxon>Bacillales</taxon>
        <taxon>Anoxybacillaceae</taxon>
        <taxon>Geobacillus</taxon>
    </lineage>
</organism>
<keyword id="KW-0067">ATP-binding</keyword>
<keyword id="KW-1003">Cell membrane</keyword>
<keyword id="KW-0963">Cytoplasm</keyword>
<keyword id="KW-0472">Membrane</keyword>
<keyword id="KW-0479">Metal-binding</keyword>
<keyword id="KW-0547">Nucleotide-binding</keyword>
<keyword id="KW-0653">Protein transport</keyword>
<keyword id="KW-1278">Translocase</keyword>
<keyword id="KW-0811">Translocation</keyword>
<keyword id="KW-0813">Transport</keyword>
<keyword id="KW-0862">Zinc</keyword>
<name>SECA1_GEOTN</name>
<dbReference type="EC" id="7.4.2.8" evidence="1"/>
<dbReference type="EMBL" id="CP000557">
    <property type="protein sequence ID" value="ABO68393.1"/>
    <property type="status" value="ALT_INIT"/>
    <property type="molecule type" value="Genomic_DNA"/>
</dbReference>
<dbReference type="RefSeq" id="WP_011888194.1">
    <property type="nucleotide sequence ID" value="NC_009328.1"/>
</dbReference>
<dbReference type="SMR" id="A4IST9"/>
<dbReference type="GeneID" id="87622803"/>
<dbReference type="KEGG" id="gtn:GTNG_3048"/>
<dbReference type="eggNOG" id="COG0653">
    <property type="taxonomic scope" value="Bacteria"/>
</dbReference>
<dbReference type="HOGENOM" id="CLU_005314_3_0_9"/>
<dbReference type="Proteomes" id="UP000001578">
    <property type="component" value="Chromosome"/>
</dbReference>
<dbReference type="GO" id="GO:0031522">
    <property type="term" value="C:cell envelope Sec protein transport complex"/>
    <property type="evidence" value="ECO:0007669"/>
    <property type="project" value="TreeGrafter"/>
</dbReference>
<dbReference type="GO" id="GO:0005829">
    <property type="term" value="C:cytosol"/>
    <property type="evidence" value="ECO:0007669"/>
    <property type="project" value="TreeGrafter"/>
</dbReference>
<dbReference type="GO" id="GO:0005886">
    <property type="term" value="C:plasma membrane"/>
    <property type="evidence" value="ECO:0007669"/>
    <property type="project" value="UniProtKB-SubCell"/>
</dbReference>
<dbReference type="GO" id="GO:0005524">
    <property type="term" value="F:ATP binding"/>
    <property type="evidence" value="ECO:0007669"/>
    <property type="project" value="UniProtKB-UniRule"/>
</dbReference>
<dbReference type="GO" id="GO:0046872">
    <property type="term" value="F:metal ion binding"/>
    <property type="evidence" value="ECO:0007669"/>
    <property type="project" value="UniProtKB-KW"/>
</dbReference>
<dbReference type="GO" id="GO:0008564">
    <property type="term" value="F:protein-exporting ATPase activity"/>
    <property type="evidence" value="ECO:0007669"/>
    <property type="project" value="UniProtKB-EC"/>
</dbReference>
<dbReference type="GO" id="GO:0065002">
    <property type="term" value="P:intracellular protein transmembrane transport"/>
    <property type="evidence" value="ECO:0007669"/>
    <property type="project" value="UniProtKB-UniRule"/>
</dbReference>
<dbReference type="GO" id="GO:0017038">
    <property type="term" value="P:protein import"/>
    <property type="evidence" value="ECO:0007669"/>
    <property type="project" value="InterPro"/>
</dbReference>
<dbReference type="GO" id="GO:0006605">
    <property type="term" value="P:protein targeting"/>
    <property type="evidence" value="ECO:0007669"/>
    <property type="project" value="UniProtKB-UniRule"/>
</dbReference>
<dbReference type="GO" id="GO:0043952">
    <property type="term" value="P:protein transport by the Sec complex"/>
    <property type="evidence" value="ECO:0007669"/>
    <property type="project" value="TreeGrafter"/>
</dbReference>
<dbReference type="CDD" id="cd17928">
    <property type="entry name" value="DEXDc_SecA"/>
    <property type="match status" value="1"/>
</dbReference>
<dbReference type="CDD" id="cd18803">
    <property type="entry name" value="SF2_C_secA"/>
    <property type="match status" value="1"/>
</dbReference>
<dbReference type="FunFam" id="1.10.3060.10:FF:000002">
    <property type="entry name" value="Preprotein translocase subunit SecA"/>
    <property type="match status" value="1"/>
</dbReference>
<dbReference type="FunFam" id="3.40.50.300:FF:000694">
    <property type="entry name" value="Preprotein translocase subunit SecA"/>
    <property type="match status" value="1"/>
</dbReference>
<dbReference type="FunFam" id="3.90.1440.10:FF:000001">
    <property type="entry name" value="Preprotein translocase subunit SecA"/>
    <property type="match status" value="1"/>
</dbReference>
<dbReference type="FunFam" id="3.40.50.300:FF:000334">
    <property type="entry name" value="Protein translocase subunit SecA"/>
    <property type="match status" value="1"/>
</dbReference>
<dbReference type="Gene3D" id="1.10.3060.10">
    <property type="entry name" value="Helical scaffold and wing domains of SecA"/>
    <property type="match status" value="1"/>
</dbReference>
<dbReference type="Gene3D" id="3.40.50.300">
    <property type="entry name" value="P-loop containing nucleotide triphosphate hydrolases"/>
    <property type="match status" value="3"/>
</dbReference>
<dbReference type="Gene3D" id="3.90.1440.10">
    <property type="entry name" value="SecA, preprotein cross-linking domain"/>
    <property type="match status" value="1"/>
</dbReference>
<dbReference type="HAMAP" id="MF_01382">
    <property type="entry name" value="SecA"/>
    <property type="match status" value="1"/>
</dbReference>
<dbReference type="InterPro" id="IPR014001">
    <property type="entry name" value="Helicase_ATP-bd"/>
</dbReference>
<dbReference type="InterPro" id="IPR001650">
    <property type="entry name" value="Helicase_C-like"/>
</dbReference>
<dbReference type="InterPro" id="IPR027417">
    <property type="entry name" value="P-loop_NTPase"/>
</dbReference>
<dbReference type="InterPro" id="IPR004027">
    <property type="entry name" value="SEC_C_motif"/>
</dbReference>
<dbReference type="InterPro" id="IPR000185">
    <property type="entry name" value="SecA"/>
</dbReference>
<dbReference type="InterPro" id="IPR020937">
    <property type="entry name" value="SecA_CS"/>
</dbReference>
<dbReference type="InterPro" id="IPR011115">
    <property type="entry name" value="SecA_DEAD"/>
</dbReference>
<dbReference type="InterPro" id="IPR014018">
    <property type="entry name" value="SecA_motor_DEAD"/>
</dbReference>
<dbReference type="InterPro" id="IPR011130">
    <property type="entry name" value="SecA_preprotein_X-link_dom"/>
</dbReference>
<dbReference type="InterPro" id="IPR044722">
    <property type="entry name" value="SecA_SF2_C"/>
</dbReference>
<dbReference type="InterPro" id="IPR011116">
    <property type="entry name" value="SecA_Wing/Scaffold"/>
</dbReference>
<dbReference type="InterPro" id="IPR036266">
    <property type="entry name" value="SecA_Wing/Scaffold_sf"/>
</dbReference>
<dbReference type="InterPro" id="IPR036670">
    <property type="entry name" value="SecA_X-link_sf"/>
</dbReference>
<dbReference type="NCBIfam" id="NF006630">
    <property type="entry name" value="PRK09200.1"/>
    <property type="match status" value="1"/>
</dbReference>
<dbReference type="NCBIfam" id="NF009538">
    <property type="entry name" value="PRK12904.1"/>
    <property type="match status" value="1"/>
</dbReference>
<dbReference type="NCBIfam" id="TIGR00963">
    <property type="entry name" value="secA"/>
    <property type="match status" value="1"/>
</dbReference>
<dbReference type="PANTHER" id="PTHR30612:SF0">
    <property type="entry name" value="CHLOROPLAST PROTEIN-TRANSPORTING ATPASE"/>
    <property type="match status" value="1"/>
</dbReference>
<dbReference type="PANTHER" id="PTHR30612">
    <property type="entry name" value="SECA INNER MEMBRANE COMPONENT OF SEC PROTEIN SECRETION SYSTEM"/>
    <property type="match status" value="1"/>
</dbReference>
<dbReference type="Pfam" id="PF21090">
    <property type="entry name" value="P-loop_SecA"/>
    <property type="match status" value="1"/>
</dbReference>
<dbReference type="Pfam" id="PF02810">
    <property type="entry name" value="SEC-C"/>
    <property type="match status" value="1"/>
</dbReference>
<dbReference type="Pfam" id="PF07517">
    <property type="entry name" value="SecA_DEAD"/>
    <property type="match status" value="1"/>
</dbReference>
<dbReference type="Pfam" id="PF01043">
    <property type="entry name" value="SecA_PP_bind"/>
    <property type="match status" value="1"/>
</dbReference>
<dbReference type="Pfam" id="PF07516">
    <property type="entry name" value="SecA_SW"/>
    <property type="match status" value="1"/>
</dbReference>
<dbReference type="PRINTS" id="PR00906">
    <property type="entry name" value="SECA"/>
</dbReference>
<dbReference type="SMART" id="SM00957">
    <property type="entry name" value="SecA_DEAD"/>
    <property type="match status" value="1"/>
</dbReference>
<dbReference type="SMART" id="SM00958">
    <property type="entry name" value="SecA_PP_bind"/>
    <property type="match status" value="1"/>
</dbReference>
<dbReference type="SUPFAM" id="SSF81886">
    <property type="entry name" value="Helical scaffold and wing domains of SecA"/>
    <property type="match status" value="1"/>
</dbReference>
<dbReference type="SUPFAM" id="SSF52540">
    <property type="entry name" value="P-loop containing nucleoside triphosphate hydrolases"/>
    <property type="match status" value="2"/>
</dbReference>
<dbReference type="SUPFAM" id="SSF81767">
    <property type="entry name" value="Pre-protein crosslinking domain of SecA"/>
    <property type="match status" value="1"/>
</dbReference>
<dbReference type="PROSITE" id="PS01312">
    <property type="entry name" value="SECA"/>
    <property type="match status" value="1"/>
</dbReference>
<dbReference type="PROSITE" id="PS51196">
    <property type="entry name" value="SECA_MOTOR_DEAD"/>
    <property type="match status" value="1"/>
</dbReference>
<gene>
    <name evidence="1" type="primary">secA1</name>
    <name type="ordered locus">GTNG_3048</name>
</gene>
<proteinExistence type="inferred from homology"/>
<sequence length="837" mass="95257">MLGVLKKVFDPNKRQLARLEKIADQVDALGPEMARLSDEQLRQKTEEFKARYQQGESLDDLLVEAFAVVREGAKRVLGLYPYKVQIMGGVVLHEGDIAEMKTGEGKTLTATMPVYLNALTGRGVHVVTVNEYLASRDAKEMGQLYEFLGLTVGLNLSGMSREEKQAAYNADITYGTNNEFGFDYLRDNMVLYKEHIVQRPLYFAVVDEVDSILIDEARTPLIISGTAQKSTKLYVQANAFVRTLRKDVDYTYDEKSKSVQLTEEGMNKAERAFGIDNLFDLKHVTLNHHIQLALRAHVTMQRDVDYVVQDGKVIIVDPFTGRLMHGRRYSDGLHQAIEAKEGLEIQNESMTLATITFQNYFRMYEKLAGMTGTAKTEEEEFRNIYNMRVVVIPTNRPVIREDRPDLIYRTMEGKFRAVVEDIAQRHAKGQPVLVGTVAIETSELLSEMLKKRGIPHNVLNAKNHAKEAEIIAQAGQKGAVTIATNMAGRGTDIKLGEGVKELGGLAVIGTERHESRRIDNQLRGRSGRQGDPGVSQFYLSLEDELMRRFGSESLMAMMDRLGMDDSQPIQSKMVTRAVESAQKRVEGNNFDARKQLLQYDDVLREQREVIYRQRFEVLDADNLRGIIEKMIRSVIERVVNTYTPKEDLPEEWNLKGVVDYLNAYLLPEGDVTEGDLRGKEPEEMIELIWAKVKARYDEKETQIPPEQMREFERVVVLRAVDMKWMNHIDAMEQLRQGIHLRAYGQVDPLREYQMEGYAMFENMIAAIEEEVATYIMKAEIHHNLERQEVAKGEAVHPKEDGEEPKKKPIRKAVRVGRNDPCPCGSGKKYKHCCGRAV</sequence>
<feature type="chain" id="PRO_0000318357" description="Protein translocase subunit SecA 1">
    <location>
        <begin position="1"/>
        <end position="837"/>
    </location>
</feature>
<feature type="region of interest" description="Disordered" evidence="2">
    <location>
        <begin position="787"/>
        <end position="813"/>
    </location>
</feature>
<feature type="compositionally biased region" description="Basic and acidic residues" evidence="2">
    <location>
        <begin position="787"/>
        <end position="806"/>
    </location>
</feature>
<feature type="binding site" evidence="1">
    <location>
        <position position="85"/>
    </location>
    <ligand>
        <name>ATP</name>
        <dbReference type="ChEBI" id="CHEBI:30616"/>
    </ligand>
</feature>
<feature type="binding site" evidence="1">
    <location>
        <begin position="103"/>
        <end position="107"/>
    </location>
    <ligand>
        <name>ATP</name>
        <dbReference type="ChEBI" id="CHEBI:30616"/>
    </ligand>
</feature>
<feature type="binding site" evidence="1">
    <location>
        <position position="492"/>
    </location>
    <ligand>
        <name>ATP</name>
        <dbReference type="ChEBI" id="CHEBI:30616"/>
    </ligand>
</feature>
<feature type="binding site" evidence="1">
    <location>
        <position position="821"/>
    </location>
    <ligand>
        <name>Zn(2+)</name>
        <dbReference type="ChEBI" id="CHEBI:29105"/>
    </ligand>
</feature>
<feature type="binding site" evidence="1">
    <location>
        <position position="823"/>
    </location>
    <ligand>
        <name>Zn(2+)</name>
        <dbReference type="ChEBI" id="CHEBI:29105"/>
    </ligand>
</feature>
<feature type="binding site" evidence="1">
    <location>
        <position position="832"/>
    </location>
    <ligand>
        <name>Zn(2+)</name>
        <dbReference type="ChEBI" id="CHEBI:29105"/>
    </ligand>
</feature>
<feature type="binding site" evidence="1">
    <location>
        <position position="833"/>
    </location>
    <ligand>
        <name>Zn(2+)</name>
        <dbReference type="ChEBI" id="CHEBI:29105"/>
    </ligand>
</feature>
<accession>A4IST9</accession>
<evidence type="ECO:0000255" key="1">
    <source>
        <dbReference type="HAMAP-Rule" id="MF_01382"/>
    </source>
</evidence>
<evidence type="ECO:0000256" key="2">
    <source>
        <dbReference type="SAM" id="MobiDB-lite"/>
    </source>
</evidence>
<evidence type="ECO:0000305" key="3"/>